<sequence length="98" mass="11024">MYNMVSLFIVAVLLLTYANVEGSDVTGGFPVNSNNCIYPCYSTQDEIQCEEFCEKLNGRLGYCRRDACYCEHLPESVKQITNSKTFDCSNGPWDLSTV</sequence>
<name>SCX27_TITSE</name>
<proteinExistence type="inferred from homology"/>
<feature type="signal peptide" evidence="1">
    <location>
        <begin position="1"/>
        <end position="22"/>
    </location>
</feature>
<feature type="chain" id="PRO_5031554516" description="Probable sodium channel toxin Ts27">
    <location>
        <begin position="23"/>
        <end position="98"/>
    </location>
</feature>
<feature type="disulfide bond" evidence="2">
    <location>
        <begin position="36"/>
        <end position="88"/>
    </location>
</feature>
<feature type="disulfide bond" evidence="2">
    <location>
        <begin position="40"/>
        <end position="63"/>
    </location>
</feature>
<feature type="disulfide bond" evidence="2">
    <location>
        <begin position="49"/>
        <end position="68"/>
    </location>
</feature>
<feature type="disulfide bond" evidence="2">
    <location>
        <begin position="53"/>
        <end position="70"/>
    </location>
</feature>
<dbReference type="EMBL" id="MT081341">
    <property type="protein sequence ID" value="QPD99023.1"/>
    <property type="molecule type" value="mRNA"/>
</dbReference>
<dbReference type="EMBL" id="GEUW01000039">
    <property type="protein sequence ID" value="JAW07006.1"/>
    <property type="molecule type" value="mRNA"/>
</dbReference>
<dbReference type="SMR" id="A0A7S8RGC8"/>
<dbReference type="GO" id="GO:0005576">
    <property type="term" value="C:extracellular region"/>
    <property type="evidence" value="ECO:0007669"/>
    <property type="project" value="UniProtKB-SubCell"/>
</dbReference>
<dbReference type="GO" id="GO:0015459">
    <property type="term" value="F:potassium channel regulator activity"/>
    <property type="evidence" value="ECO:0007669"/>
    <property type="project" value="UniProtKB-KW"/>
</dbReference>
<dbReference type="GO" id="GO:0019871">
    <property type="term" value="F:sodium channel inhibitor activity"/>
    <property type="evidence" value="ECO:0007669"/>
    <property type="project" value="InterPro"/>
</dbReference>
<dbReference type="GO" id="GO:0090729">
    <property type="term" value="F:toxin activity"/>
    <property type="evidence" value="ECO:0007669"/>
    <property type="project" value="UniProtKB-KW"/>
</dbReference>
<dbReference type="CDD" id="cd23106">
    <property type="entry name" value="neurotoxins_LC_scorpion"/>
    <property type="match status" value="1"/>
</dbReference>
<dbReference type="Gene3D" id="3.30.30.10">
    <property type="entry name" value="Knottin, scorpion toxin-like"/>
    <property type="match status" value="1"/>
</dbReference>
<dbReference type="InterPro" id="IPR036574">
    <property type="entry name" value="Scorpion_toxin-like_sf"/>
</dbReference>
<dbReference type="InterPro" id="IPR002061">
    <property type="entry name" value="Scorpion_toxinL/defensin"/>
</dbReference>
<dbReference type="Pfam" id="PF00537">
    <property type="entry name" value="Toxin_3"/>
    <property type="match status" value="1"/>
</dbReference>
<dbReference type="SUPFAM" id="SSF57095">
    <property type="entry name" value="Scorpion toxin-like"/>
    <property type="match status" value="1"/>
</dbReference>
<organism>
    <name type="scientific">Tityus serrulatus</name>
    <name type="common">Brazilian scorpion</name>
    <dbReference type="NCBI Taxonomy" id="6887"/>
    <lineage>
        <taxon>Eukaryota</taxon>
        <taxon>Metazoa</taxon>
        <taxon>Ecdysozoa</taxon>
        <taxon>Arthropoda</taxon>
        <taxon>Chelicerata</taxon>
        <taxon>Arachnida</taxon>
        <taxon>Scorpiones</taxon>
        <taxon>Buthida</taxon>
        <taxon>Buthoidea</taxon>
        <taxon>Buthidae</taxon>
        <taxon>Tityus</taxon>
    </lineage>
</organism>
<protein>
    <recommendedName>
        <fullName evidence="3">Probable sodium channel toxin Ts27</fullName>
    </recommendedName>
    <alternativeName>
        <fullName evidence="3">Putative NaTx</fullName>
    </alternativeName>
    <alternativeName>
        <fullName evidence="4">Tityustoxin-27</fullName>
    </alternativeName>
</protein>
<comment type="function">
    <text evidence="4">Probable sodium channel toxin.</text>
</comment>
<comment type="subcellular location">
    <subcellularLocation>
        <location evidence="5 6">Secreted</location>
    </subcellularLocation>
</comment>
<comment type="tissue specificity">
    <text evidence="5 6">Expressed by the venom gland.</text>
</comment>
<comment type="domain">
    <text evidence="4">Has the structural arrangement of an alpha-helix connected to antiparallel beta-sheets by disulfide bonds (CS-alpha/beta).</text>
</comment>
<comment type="similarity">
    <text evidence="4">Belongs to the long (4 C-C) scorpion toxin superfamily. Sodium channel inhibitor family.</text>
</comment>
<evidence type="ECO:0000255" key="1"/>
<evidence type="ECO:0000255" key="2">
    <source>
        <dbReference type="PROSITE-ProRule" id="PRU01210"/>
    </source>
</evidence>
<evidence type="ECO:0000303" key="3">
    <source>
    </source>
</evidence>
<evidence type="ECO:0000305" key="4"/>
<evidence type="ECO:0000305" key="5">
    <source>
    </source>
</evidence>
<evidence type="ECO:0000305" key="6">
    <source>
    </source>
</evidence>
<evidence type="ECO:0000312" key="7">
    <source>
        <dbReference type="EMBL" id="JAW07006.1"/>
    </source>
</evidence>
<evidence type="ECO:0000312" key="8">
    <source>
        <dbReference type="EMBL" id="QPD99023.1"/>
    </source>
</evidence>
<accession>A0A7S8RGC8</accession>
<accession>A0A218QWY6</accession>
<keyword id="KW-1015">Disulfide bond</keyword>
<keyword id="KW-0872">Ion channel impairing toxin</keyword>
<keyword id="KW-0528">Neurotoxin</keyword>
<keyword id="KW-0632">Potassium channel impairing toxin</keyword>
<keyword id="KW-0964">Secreted</keyword>
<keyword id="KW-0732">Signal</keyword>
<keyword id="KW-0800">Toxin</keyword>
<keyword id="KW-1220">Voltage-gated potassium channel impairing toxin</keyword>
<reference evidence="8" key="1">
    <citation type="journal article" date="2021" name="Toxicon">
        <title>Novel components of Tityus serrulatus venom: a transcriptomic approach.</title>
        <authorList>
            <person name="Kalapothakis Y."/>
            <person name="Miranda K."/>
            <person name="Pereira A.H."/>
            <person name="Witt A.S.A."/>
            <person name="Marani C."/>
            <person name="Martins A.P."/>
            <person name="Leal H.G."/>
            <person name="Campos-Junior E."/>
            <person name="Pimenta A.M.C."/>
            <person name="Borges A."/>
            <person name="Chavez-Olortegui C."/>
            <person name="Kalapothakis E."/>
        </authorList>
    </citation>
    <scope>NUCLEOTIDE SEQUENCE [MRNA]</scope>
    <source>
        <tissue>Telson</tissue>
    </source>
</reference>
<reference evidence="7" key="2">
    <citation type="journal article" date="2018" name="PLoS ONE">
        <title>Proteomic endorsed transcriptomic profiles of venom glands from Tityus obscurus and T. serrulatus scorpions.</title>
        <authorList>
            <person name="de Oliveira U.C."/>
            <person name="Nishiyama M.Y. Jr."/>
            <person name="Dos Santos M.B.V."/>
            <person name="Santos-da-Silva A.P."/>
            <person name="Chalkidis H.M."/>
            <person name="Souza-Imberg A."/>
            <person name="Candido D.M."/>
            <person name="Yamanouye N."/>
            <person name="Dorce V.A.C."/>
            <person name="Junqueira-de-Azevedo I.L.M."/>
        </authorList>
    </citation>
    <scope>NUCLEOTIDE SEQUENCE [MRNA] OF 5-98</scope>
    <source>
        <tissue>Telson</tissue>
    </source>
</reference>